<dbReference type="EC" id="3.1.11.6" evidence="1"/>
<dbReference type="EMBL" id="CP000235">
    <property type="protein sequence ID" value="ABD44358.1"/>
    <property type="molecule type" value="Genomic_DNA"/>
</dbReference>
<dbReference type="RefSeq" id="WP_011450236.1">
    <property type="nucleotide sequence ID" value="NC_007797.1"/>
</dbReference>
<dbReference type="SMR" id="Q2GLP1"/>
<dbReference type="STRING" id="212042.APH_0079"/>
<dbReference type="PaxDb" id="212042-APH_0079"/>
<dbReference type="EnsemblBacteria" id="ABD44358">
    <property type="protein sequence ID" value="ABD44358"/>
    <property type="gene ID" value="APH_0079"/>
</dbReference>
<dbReference type="GeneID" id="92747671"/>
<dbReference type="KEGG" id="aph:APH_0079"/>
<dbReference type="eggNOG" id="COG1722">
    <property type="taxonomic scope" value="Bacteria"/>
</dbReference>
<dbReference type="HOGENOM" id="CLU_145918_3_1_5"/>
<dbReference type="Proteomes" id="UP000001943">
    <property type="component" value="Chromosome"/>
</dbReference>
<dbReference type="GO" id="GO:0005829">
    <property type="term" value="C:cytosol"/>
    <property type="evidence" value="ECO:0007669"/>
    <property type="project" value="TreeGrafter"/>
</dbReference>
<dbReference type="GO" id="GO:0009318">
    <property type="term" value="C:exodeoxyribonuclease VII complex"/>
    <property type="evidence" value="ECO:0007669"/>
    <property type="project" value="InterPro"/>
</dbReference>
<dbReference type="GO" id="GO:0008855">
    <property type="term" value="F:exodeoxyribonuclease VII activity"/>
    <property type="evidence" value="ECO:0007669"/>
    <property type="project" value="UniProtKB-UniRule"/>
</dbReference>
<dbReference type="GO" id="GO:0006308">
    <property type="term" value="P:DNA catabolic process"/>
    <property type="evidence" value="ECO:0007669"/>
    <property type="project" value="UniProtKB-UniRule"/>
</dbReference>
<dbReference type="Gene3D" id="1.10.287.1040">
    <property type="entry name" value="Exonuclease VII, small subunit"/>
    <property type="match status" value="1"/>
</dbReference>
<dbReference type="HAMAP" id="MF_00337">
    <property type="entry name" value="Exonuc_7_S"/>
    <property type="match status" value="1"/>
</dbReference>
<dbReference type="InterPro" id="IPR003761">
    <property type="entry name" value="Exonuc_VII_S"/>
</dbReference>
<dbReference type="InterPro" id="IPR037004">
    <property type="entry name" value="Exonuc_VII_ssu_sf"/>
</dbReference>
<dbReference type="NCBIfam" id="TIGR01280">
    <property type="entry name" value="xseB"/>
    <property type="match status" value="1"/>
</dbReference>
<dbReference type="PANTHER" id="PTHR34137">
    <property type="entry name" value="EXODEOXYRIBONUCLEASE 7 SMALL SUBUNIT"/>
    <property type="match status" value="1"/>
</dbReference>
<dbReference type="PANTHER" id="PTHR34137:SF1">
    <property type="entry name" value="EXODEOXYRIBONUCLEASE 7 SMALL SUBUNIT"/>
    <property type="match status" value="1"/>
</dbReference>
<dbReference type="Pfam" id="PF02609">
    <property type="entry name" value="Exonuc_VII_S"/>
    <property type="match status" value="1"/>
</dbReference>
<dbReference type="PIRSF" id="PIRSF006488">
    <property type="entry name" value="Exonuc_VII_S"/>
    <property type="match status" value="1"/>
</dbReference>
<dbReference type="SUPFAM" id="SSF116842">
    <property type="entry name" value="XseB-like"/>
    <property type="match status" value="1"/>
</dbReference>
<protein>
    <recommendedName>
        <fullName evidence="1">Exodeoxyribonuclease 7 small subunit</fullName>
        <ecNumber evidence="1">3.1.11.6</ecNumber>
    </recommendedName>
    <alternativeName>
        <fullName evidence="1">Exodeoxyribonuclease VII small subunit</fullName>
        <shortName evidence="1">Exonuclease VII small subunit</shortName>
    </alternativeName>
</protein>
<evidence type="ECO:0000255" key="1">
    <source>
        <dbReference type="HAMAP-Rule" id="MF_00337"/>
    </source>
</evidence>
<gene>
    <name evidence="1" type="primary">xseB</name>
    <name type="ordered locus">APH_0079</name>
</gene>
<keyword id="KW-0963">Cytoplasm</keyword>
<keyword id="KW-0269">Exonuclease</keyword>
<keyword id="KW-0378">Hydrolase</keyword>
<keyword id="KW-0540">Nuclease</keyword>
<accession>Q2GLP1</accession>
<organism>
    <name type="scientific">Anaplasma phagocytophilum (strain HZ)</name>
    <dbReference type="NCBI Taxonomy" id="212042"/>
    <lineage>
        <taxon>Bacteria</taxon>
        <taxon>Pseudomonadati</taxon>
        <taxon>Pseudomonadota</taxon>
        <taxon>Alphaproteobacteria</taxon>
        <taxon>Rickettsiales</taxon>
        <taxon>Anaplasmataceae</taxon>
        <taxon>Anaplasma</taxon>
        <taxon>phagocytophilum group</taxon>
    </lineage>
</organism>
<feature type="chain" id="PRO_1000119895" description="Exodeoxyribonuclease 7 small subunit">
    <location>
        <begin position="1"/>
        <end position="75"/>
    </location>
</feature>
<comment type="function">
    <text evidence="1">Bidirectionally degrades single-stranded DNA into large acid-insoluble oligonucleotides, which are then degraded further into small acid-soluble oligonucleotides.</text>
</comment>
<comment type="catalytic activity">
    <reaction evidence="1">
        <text>Exonucleolytic cleavage in either 5'- to 3'- or 3'- to 5'-direction to yield nucleoside 5'-phosphates.</text>
        <dbReference type="EC" id="3.1.11.6"/>
    </reaction>
</comment>
<comment type="subunit">
    <text evidence="1">Heterooligomer composed of large and small subunits.</text>
</comment>
<comment type="subcellular location">
    <subcellularLocation>
        <location evidence="1">Cytoplasm</location>
    </subcellularLocation>
</comment>
<comment type="similarity">
    <text evidence="1">Belongs to the XseB family.</text>
</comment>
<name>EX7S_ANAPZ</name>
<proteinExistence type="inferred from homology"/>
<sequence>MSIHISSKFEEAMKELENIVAELESGNVPLERSVELFNKGKELHKYCDKVIKEISLHIESVDPDDKELSAKFSDD</sequence>
<reference key="1">
    <citation type="journal article" date="2006" name="PLoS Genet.">
        <title>Comparative genomics of emerging human ehrlichiosis agents.</title>
        <authorList>
            <person name="Dunning Hotopp J.C."/>
            <person name="Lin M."/>
            <person name="Madupu R."/>
            <person name="Crabtree J."/>
            <person name="Angiuoli S.V."/>
            <person name="Eisen J.A."/>
            <person name="Seshadri R."/>
            <person name="Ren Q."/>
            <person name="Wu M."/>
            <person name="Utterback T.R."/>
            <person name="Smith S."/>
            <person name="Lewis M."/>
            <person name="Khouri H."/>
            <person name="Zhang C."/>
            <person name="Niu H."/>
            <person name="Lin Q."/>
            <person name="Ohashi N."/>
            <person name="Zhi N."/>
            <person name="Nelson W.C."/>
            <person name="Brinkac L.M."/>
            <person name="Dodson R.J."/>
            <person name="Rosovitz M.J."/>
            <person name="Sundaram J.P."/>
            <person name="Daugherty S.C."/>
            <person name="Davidsen T."/>
            <person name="Durkin A.S."/>
            <person name="Gwinn M.L."/>
            <person name="Haft D.H."/>
            <person name="Selengut J.D."/>
            <person name="Sullivan S.A."/>
            <person name="Zafar N."/>
            <person name="Zhou L."/>
            <person name="Benahmed F."/>
            <person name="Forberger H."/>
            <person name="Halpin R."/>
            <person name="Mulligan S."/>
            <person name="Robinson J."/>
            <person name="White O."/>
            <person name="Rikihisa Y."/>
            <person name="Tettelin H."/>
        </authorList>
    </citation>
    <scope>NUCLEOTIDE SEQUENCE [LARGE SCALE GENOMIC DNA]</scope>
    <source>
        <strain>HZ</strain>
    </source>
</reference>